<evidence type="ECO:0000250" key="1"/>
<evidence type="ECO:0000250" key="2">
    <source>
        <dbReference type="UniProtKB" id="Q9GZL7"/>
    </source>
</evidence>
<evidence type="ECO:0000255" key="3">
    <source>
        <dbReference type="HAMAP-Rule" id="MF_03029"/>
    </source>
</evidence>
<evidence type="ECO:0000256" key="4">
    <source>
        <dbReference type="SAM" id="MobiDB-lite"/>
    </source>
</evidence>
<dbReference type="EMBL" id="BT029892">
    <property type="protein sequence ID" value="ABM06142.1"/>
    <property type="molecule type" value="mRNA"/>
</dbReference>
<dbReference type="EMBL" id="BC120386">
    <property type="protein sequence ID" value="AAI20387.1"/>
    <property type="molecule type" value="mRNA"/>
</dbReference>
<dbReference type="EMBL" id="BC142121">
    <property type="protein sequence ID" value="AAI42122.1"/>
    <property type="molecule type" value="mRNA"/>
</dbReference>
<dbReference type="RefSeq" id="NP_001069375.1">
    <property type="nucleotide sequence ID" value="NM_001075907.1"/>
</dbReference>
<dbReference type="SMR" id="Q0VC24"/>
<dbReference type="FunCoup" id="Q0VC24">
    <property type="interactions" value="3375"/>
</dbReference>
<dbReference type="STRING" id="9913.ENSBTAP00000020499"/>
<dbReference type="PaxDb" id="9913-ENSBTAP00000020499"/>
<dbReference type="GeneID" id="528209"/>
<dbReference type="KEGG" id="bta:528209"/>
<dbReference type="CTD" id="55759"/>
<dbReference type="VEuPathDB" id="HostDB:ENSBTAG00000015424"/>
<dbReference type="eggNOG" id="KOG0313">
    <property type="taxonomic scope" value="Eukaryota"/>
</dbReference>
<dbReference type="HOGENOM" id="CLU_000288_57_0_1"/>
<dbReference type="InParanoid" id="Q0VC24"/>
<dbReference type="OMA" id="DHKYVEF"/>
<dbReference type="OrthoDB" id="10251381at2759"/>
<dbReference type="TreeFam" id="TF313023"/>
<dbReference type="Reactome" id="R-BTA-6791226">
    <property type="pathway name" value="Major pathway of rRNA processing in the nucleolus and cytosol"/>
</dbReference>
<dbReference type="CD-CODE" id="D7FE2080">
    <property type="entry name" value="Nucleolus"/>
</dbReference>
<dbReference type="Proteomes" id="UP000009136">
    <property type="component" value="Chromosome 2"/>
</dbReference>
<dbReference type="Bgee" id="ENSBTAG00000015424">
    <property type="expression patterns" value="Expressed in conceptus and 108 other cell types or tissues"/>
</dbReference>
<dbReference type="GO" id="GO:0005730">
    <property type="term" value="C:nucleolus"/>
    <property type="evidence" value="ECO:0000250"/>
    <property type="project" value="UniProtKB"/>
</dbReference>
<dbReference type="GO" id="GO:0005654">
    <property type="term" value="C:nucleoplasm"/>
    <property type="evidence" value="ECO:0000250"/>
    <property type="project" value="UniProtKB"/>
</dbReference>
<dbReference type="GO" id="GO:0070545">
    <property type="term" value="C:PeBoW complex"/>
    <property type="evidence" value="ECO:0000250"/>
    <property type="project" value="UniProtKB"/>
</dbReference>
<dbReference type="GO" id="GO:0030687">
    <property type="term" value="C:preribosome, large subunit precursor"/>
    <property type="evidence" value="ECO:0000250"/>
    <property type="project" value="UniProtKB"/>
</dbReference>
<dbReference type="GO" id="GO:0043021">
    <property type="term" value="F:ribonucleoprotein complex binding"/>
    <property type="evidence" value="ECO:0007669"/>
    <property type="project" value="UniProtKB-UniRule"/>
</dbReference>
<dbReference type="GO" id="GO:0000466">
    <property type="term" value="P:maturation of 5.8S rRNA from tricistronic rRNA transcript (SSU-rRNA, 5.8S rRNA, LSU-rRNA)"/>
    <property type="evidence" value="ECO:0000250"/>
    <property type="project" value="UniProtKB"/>
</dbReference>
<dbReference type="GO" id="GO:0000463">
    <property type="term" value="P:maturation of LSU-rRNA from tricistronic rRNA transcript (SSU-rRNA, 5.8S rRNA, LSU-rRNA)"/>
    <property type="evidence" value="ECO:0000250"/>
    <property type="project" value="UniProtKB"/>
</dbReference>
<dbReference type="GO" id="GO:0051726">
    <property type="term" value="P:regulation of cell cycle"/>
    <property type="evidence" value="ECO:0000250"/>
    <property type="project" value="UniProtKB"/>
</dbReference>
<dbReference type="CDD" id="cd00200">
    <property type="entry name" value="WD40"/>
    <property type="match status" value="1"/>
</dbReference>
<dbReference type="FunFam" id="2.130.10.10:FF:000272">
    <property type="entry name" value="Ribosome biogenesis protein WDR12"/>
    <property type="match status" value="1"/>
</dbReference>
<dbReference type="Gene3D" id="2.130.10.10">
    <property type="entry name" value="YVTN repeat-like/Quinoprotein amine dehydrogenase"/>
    <property type="match status" value="1"/>
</dbReference>
<dbReference type="HAMAP" id="MF_03029">
    <property type="entry name" value="WDR12"/>
    <property type="match status" value="1"/>
</dbReference>
<dbReference type="InterPro" id="IPR020472">
    <property type="entry name" value="G-protein_beta_WD-40_rep"/>
</dbReference>
<dbReference type="InterPro" id="IPR012972">
    <property type="entry name" value="NLE"/>
</dbReference>
<dbReference type="InterPro" id="IPR015943">
    <property type="entry name" value="WD40/YVTN_repeat-like_dom_sf"/>
</dbReference>
<dbReference type="InterPro" id="IPR019775">
    <property type="entry name" value="WD40_repeat_CS"/>
</dbReference>
<dbReference type="InterPro" id="IPR036322">
    <property type="entry name" value="WD40_repeat_dom_sf"/>
</dbReference>
<dbReference type="InterPro" id="IPR001680">
    <property type="entry name" value="WD40_rpt"/>
</dbReference>
<dbReference type="InterPro" id="IPR028599">
    <property type="entry name" value="WDR12/Ytm1"/>
</dbReference>
<dbReference type="PANTHER" id="PTHR19855:SF11">
    <property type="entry name" value="RIBOSOME BIOGENESIS PROTEIN WDR12"/>
    <property type="match status" value="1"/>
</dbReference>
<dbReference type="PANTHER" id="PTHR19855">
    <property type="entry name" value="WD40 REPEAT PROTEIN 12, 37"/>
    <property type="match status" value="1"/>
</dbReference>
<dbReference type="Pfam" id="PF08154">
    <property type="entry name" value="NLE"/>
    <property type="match status" value="1"/>
</dbReference>
<dbReference type="Pfam" id="PF00400">
    <property type="entry name" value="WD40"/>
    <property type="match status" value="7"/>
</dbReference>
<dbReference type="PRINTS" id="PR00320">
    <property type="entry name" value="GPROTEINBRPT"/>
</dbReference>
<dbReference type="SMART" id="SM00320">
    <property type="entry name" value="WD40"/>
    <property type="match status" value="7"/>
</dbReference>
<dbReference type="SUPFAM" id="SSF50978">
    <property type="entry name" value="WD40 repeat-like"/>
    <property type="match status" value="1"/>
</dbReference>
<dbReference type="PROSITE" id="PS00678">
    <property type="entry name" value="WD_REPEATS_1"/>
    <property type="match status" value="2"/>
</dbReference>
<dbReference type="PROSITE" id="PS50082">
    <property type="entry name" value="WD_REPEATS_2"/>
    <property type="match status" value="5"/>
</dbReference>
<dbReference type="PROSITE" id="PS50294">
    <property type="entry name" value="WD_REPEATS_REGION"/>
    <property type="match status" value="1"/>
</dbReference>
<accession>Q0VC24</accession>
<accession>A5PJI2</accession>
<gene>
    <name evidence="3" type="primary">WDR12</name>
</gene>
<organism>
    <name type="scientific">Bos taurus</name>
    <name type="common">Bovine</name>
    <dbReference type="NCBI Taxonomy" id="9913"/>
    <lineage>
        <taxon>Eukaryota</taxon>
        <taxon>Metazoa</taxon>
        <taxon>Chordata</taxon>
        <taxon>Craniata</taxon>
        <taxon>Vertebrata</taxon>
        <taxon>Euteleostomi</taxon>
        <taxon>Mammalia</taxon>
        <taxon>Eutheria</taxon>
        <taxon>Laurasiatheria</taxon>
        <taxon>Artiodactyla</taxon>
        <taxon>Ruminantia</taxon>
        <taxon>Pecora</taxon>
        <taxon>Bovidae</taxon>
        <taxon>Bovinae</taxon>
        <taxon>Bos</taxon>
    </lineage>
</organism>
<protein>
    <recommendedName>
        <fullName evidence="3">Ribosome biogenesis protein WDR12</fullName>
    </recommendedName>
    <alternativeName>
        <fullName evidence="3">WD repeat-containing protein 12</fullName>
    </alternativeName>
</protein>
<keyword id="KW-0007">Acetylation</keyword>
<keyword id="KW-1017">Isopeptide bond</keyword>
<keyword id="KW-0539">Nucleus</keyword>
<keyword id="KW-0597">Phosphoprotein</keyword>
<keyword id="KW-1185">Reference proteome</keyword>
<keyword id="KW-0677">Repeat</keyword>
<keyword id="KW-0690">Ribosome biogenesis</keyword>
<keyword id="KW-0698">rRNA processing</keyword>
<keyword id="KW-0832">Ubl conjugation</keyword>
<keyword id="KW-0853">WD repeat</keyword>
<name>WDR12_BOVIN</name>
<reference key="1">
    <citation type="journal article" date="2005" name="BMC Genomics">
        <title>Characterization of 954 bovine full-CDS cDNA sequences.</title>
        <authorList>
            <person name="Harhay G.P."/>
            <person name="Sonstegard T.S."/>
            <person name="Keele J.W."/>
            <person name="Heaton M.P."/>
            <person name="Clawson M.L."/>
            <person name="Snelling W.M."/>
            <person name="Wiedmann R.T."/>
            <person name="Van Tassell C.P."/>
            <person name="Smith T.P.L."/>
        </authorList>
    </citation>
    <scope>NUCLEOTIDE SEQUENCE [LARGE SCALE MRNA]</scope>
</reference>
<reference key="2">
    <citation type="submission" date="2007-06" db="EMBL/GenBank/DDBJ databases">
        <authorList>
            <consortium name="NIH - Mammalian Gene Collection (MGC) project"/>
        </authorList>
    </citation>
    <scope>NUCLEOTIDE SEQUENCE [LARGE SCALE MRNA]</scope>
    <source>
        <strain>Hereford</strain>
        <tissue>Ascending colon</tissue>
        <tissue>Basal ganglia</tissue>
    </source>
</reference>
<sequence length="423" mass="47709">MAQLQTRFFTDNKKYAVDDVPFSIPAASEIADLSNLINKLLEAKNEFHKHVEFDFLIKGQFLRMPLFKHMELENISSEEVVELEYVEKYTAPQPEQCMFHDDWISAIEGTEEWILTGSYDKTSRIWSLEGKSIMTIVGHTDVVKDVAWVKKDSLSCLLLSASMDQTILLWEWNVERNKVKALHCCRGHAGSVDSIAVDSTGTKFCSGSWDKMLKIWSTVPTDEEDEMEESTNRPRKKQKTEQLGLTRTPIVTLSGHKEAISSVLWSDAEEICSASWDHTIKVWDVESGSLKSTLTGNKVFNCISYSPLCKRLASGSTDRHIRLWDPRTKDGSLVSLSLTSHTGWVTSVKWSPTHEQQLISGSLDNMVKLWDTRSCKAPLYDLAAHEDKVLSVDWTDSGLLLSGGADNKLYSYRYSPTTSHVGA</sequence>
<proteinExistence type="evidence at transcript level"/>
<feature type="initiator methionine" description="Removed" evidence="2">
    <location>
        <position position="1"/>
    </location>
</feature>
<feature type="chain" id="PRO_0000283706" description="Ribosome biogenesis protein WDR12">
    <location>
        <begin position="2"/>
        <end position="423"/>
    </location>
</feature>
<feature type="repeat" description="WD 1">
    <location>
        <begin position="99"/>
        <end position="137"/>
    </location>
</feature>
<feature type="repeat" description="WD 2">
    <location>
        <begin position="138"/>
        <end position="180"/>
    </location>
</feature>
<feature type="repeat" description="WD 3">
    <location>
        <begin position="187"/>
        <end position="226"/>
    </location>
</feature>
<feature type="repeat" description="WD 4">
    <location>
        <begin position="255"/>
        <end position="293"/>
    </location>
</feature>
<feature type="repeat" description="WD 5">
    <location>
        <begin position="295"/>
        <end position="334"/>
    </location>
</feature>
<feature type="repeat" description="WD 6">
    <location>
        <begin position="340"/>
        <end position="380"/>
    </location>
</feature>
<feature type="repeat" description="WD 7">
    <location>
        <begin position="384"/>
        <end position="422"/>
    </location>
</feature>
<feature type="region of interest" description="Ubiquitin-like (UBL) domain" evidence="3">
    <location>
        <begin position="4"/>
        <end position="87"/>
    </location>
</feature>
<feature type="region of interest" description="Sufficient for nucleolar localization" evidence="1">
    <location>
        <begin position="98"/>
        <end position="423"/>
    </location>
</feature>
<feature type="region of interest" description="Disordered" evidence="4">
    <location>
        <begin position="221"/>
        <end position="242"/>
    </location>
</feature>
<feature type="modified residue" description="N-acetylalanine" evidence="2">
    <location>
        <position position="2"/>
    </location>
</feature>
<feature type="modified residue" description="Phosphoserine" evidence="2">
    <location>
        <position position="415"/>
    </location>
</feature>
<feature type="cross-link" description="Glycyl lysine isopeptide (Lys-Gly) (interchain with G-Cter in SUMO1)" evidence="2">
    <location>
        <position position="239"/>
    </location>
</feature>
<comment type="function">
    <text evidence="3">Component of the PeBoW complex, which is required for maturation of 28S and 5.8S ribosomal RNAs and formation of the 60S ribosome.</text>
</comment>
<comment type="subunit">
    <text evidence="3">Component of the PeBoW complex, composed of BOP1, PES1 and WDR12. The complex is held together by BOP1, which interacts with PES1 via its N-terminal domain and with WDR12 via a high-affinity interaction between the seven-bladed beta-propeller domains of the 2 proteins. The PeBoW complex associates with the 66S pre-ribosome. Interacts (via UBL domain) with MDN1 (via VWFA/MIDAS domain).</text>
</comment>
<comment type="subcellular location">
    <subcellularLocation>
        <location evidence="3">Nucleus</location>
        <location evidence="3">Nucleolus</location>
    </subcellularLocation>
    <subcellularLocation>
        <location evidence="3">Nucleus</location>
        <location evidence="3">Nucleoplasm</location>
    </subcellularLocation>
</comment>
<comment type="similarity">
    <text evidence="3">Belongs to the WD repeat WDR12/YTM1 family.</text>
</comment>